<accession>Q8P519</accession>
<reference key="1">
    <citation type="journal article" date="2002" name="Nature">
        <title>Comparison of the genomes of two Xanthomonas pathogens with differing host specificities.</title>
        <authorList>
            <person name="da Silva A.C.R."/>
            <person name="Ferro J.A."/>
            <person name="Reinach F.C."/>
            <person name="Farah C.S."/>
            <person name="Furlan L.R."/>
            <person name="Quaggio R.B."/>
            <person name="Monteiro-Vitorello C.B."/>
            <person name="Van Sluys M.A."/>
            <person name="Almeida N.F. Jr."/>
            <person name="Alves L.M.C."/>
            <person name="do Amaral A.M."/>
            <person name="Bertolini M.C."/>
            <person name="Camargo L.E.A."/>
            <person name="Camarotte G."/>
            <person name="Cannavan F."/>
            <person name="Cardozo J."/>
            <person name="Chambergo F."/>
            <person name="Ciapina L.P."/>
            <person name="Cicarelli R.M.B."/>
            <person name="Coutinho L.L."/>
            <person name="Cursino-Santos J.R."/>
            <person name="El-Dorry H."/>
            <person name="Faria J.B."/>
            <person name="Ferreira A.J.S."/>
            <person name="Ferreira R.C.C."/>
            <person name="Ferro M.I.T."/>
            <person name="Formighieri E.F."/>
            <person name="Franco M.C."/>
            <person name="Greggio C.C."/>
            <person name="Gruber A."/>
            <person name="Katsuyama A.M."/>
            <person name="Kishi L.T."/>
            <person name="Leite R.P."/>
            <person name="Lemos E.G.M."/>
            <person name="Lemos M.V.F."/>
            <person name="Locali E.C."/>
            <person name="Machado M.A."/>
            <person name="Madeira A.M.B.N."/>
            <person name="Martinez-Rossi N.M."/>
            <person name="Martins E.C."/>
            <person name="Meidanis J."/>
            <person name="Menck C.F.M."/>
            <person name="Miyaki C.Y."/>
            <person name="Moon D.H."/>
            <person name="Moreira L.M."/>
            <person name="Novo M.T.M."/>
            <person name="Okura V.K."/>
            <person name="Oliveira M.C."/>
            <person name="Oliveira V.R."/>
            <person name="Pereira H.A."/>
            <person name="Rossi A."/>
            <person name="Sena J.A.D."/>
            <person name="Silva C."/>
            <person name="de Souza R.F."/>
            <person name="Spinola L.A.F."/>
            <person name="Takita M.A."/>
            <person name="Tamura R.E."/>
            <person name="Teixeira E.C."/>
            <person name="Tezza R.I.D."/>
            <person name="Trindade dos Santos M."/>
            <person name="Truffi D."/>
            <person name="Tsai S.M."/>
            <person name="White F.F."/>
            <person name="Setubal J.C."/>
            <person name="Kitajima J.P."/>
        </authorList>
    </citation>
    <scope>NUCLEOTIDE SEQUENCE [LARGE SCALE GENOMIC DNA]</scope>
    <source>
        <strain>ATCC 33913 / DSM 3586 / NCPPB 528 / LMG 568 / P 25</strain>
    </source>
</reference>
<evidence type="ECO:0000255" key="1">
    <source>
        <dbReference type="HAMAP-Rule" id="MF_01060"/>
    </source>
</evidence>
<dbReference type="EC" id="3.2.1.28" evidence="1"/>
<dbReference type="EMBL" id="AE008922">
    <property type="protein sequence ID" value="AAM42799.1"/>
    <property type="molecule type" value="Genomic_DNA"/>
</dbReference>
<dbReference type="RefSeq" id="NP_638875.2">
    <property type="nucleotide sequence ID" value="NC_003902.1"/>
</dbReference>
<dbReference type="SMR" id="Q8P519"/>
<dbReference type="STRING" id="190485.XCC3529"/>
<dbReference type="CAZy" id="GH37">
    <property type="family name" value="Glycoside Hydrolase Family 37"/>
</dbReference>
<dbReference type="EnsemblBacteria" id="AAM42799">
    <property type="protein sequence ID" value="AAM42799"/>
    <property type="gene ID" value="XCC3529"/>
</dbReference>
<dbReference type="KEGG" id="xcc:XCC3529"/>
<dbReference type="PATRIC" id="fig|190485.4.peg.3777"/>
<dbReference type="eggNOG" id="COG1626">
    <property type="taxonomic scope" value="Bacteria"/>
</dbReference>
<dbReference type="HOGENOM" id="CLU_006451_3_1_6"/>
<dbReference type="OrthoDB" id="106887at2"/>
<dbReference type="Proteomes" id="UP000001010">
    <property type="component" value="Chromosome"/>
</dbReference>
<dbReference type="GO" id="GO:0042597">
    <property type="term" value="C:periplasmic space"/>
    <property type="evidence" value="ECO:0007669"/>
    <property type="project" value="UniProtKB-SubCell"/>
</dbReference>
<dbReference type="GO" id="GO:0004555">
    <property type="term" value="F:alpha,alpha-trehalase activity"/>
    <property type="evidence" value="ECO:0000318"/>
    <property type="project" value="GO_Central"/>
</dbReference>
<dbReference type="GO" id="GO:0071474">
    <property type="term" value="P:cellular hyperosmotic response"/>
    <property type="evidence" value="ECO:0007669"/>
    <property type="project" value="InterPro"/>
</dbReference>
<dbReference type="GO" id="GO:0005993">
    <property type="term" value="P:trehalose catabolic process"/>
    <property type="evidence" value="ECO:0000318"/>
    <property type="project" value="GO_Central"/>
</dbReference>
<dbReference type="FunFam" id="1.50.10.10:FF:000003">
    <property type="entry name" value="Cytoplasmic trehalase"/>
    <property type="match status" value="1"/>
</dbReference>
<dbReference type="Gene3D" id="1.50.10.10">
    <property type="match status" value="1"/>
</dbReference>
<dbReference type="HAMAP" id="MF_01060">
    <property type="entry name" value="Peripl_trehalase"/>
    <property type="match status" value="1"/>
</dbReference>
<dbReference type="InterPro" id="IPR008928">
    <property type="entry name" value="6-hairpin_glycosidase_sf"/>
</dbReference>
<dbReference type="InterPro" id="IPR012341">
    <property type="entry name" value="6hp_glycosidase-like_sf"/>
</dbReference>
<dbReference type="InterPro" id="IPR001661">
    <property type="entry name" value="Glyco_hydro_37"/>
</dbReference>
<dbReference type="InterPro" id="IPR018232">
    <property type="entry name" value="Glyco_hydro_37_CS"/>
</dbReference>
<dbReference type="InterPro" id="IPR023720">
    <property type="entry name" value="Trehalase_periplasmic"/>
</dbReference>
<dbReference type="NCBIfam" id="NF009773">
    <property type="entry name" value="PRK13270.1"/>
    <property type="match status" value="1"/>
</dbReference>
<dbReference type="NCBIfam" id="NF009774">
    <property type="entry name" value="PRK13271.1"/>
    <property type="match status" value="1"/>
</dbReference>
<dbReference type="NCBIfam" id="NF009775">
    <property type="entry name" value="PRK13272.1"/>
    <property type="match status" value="1"/>
</dbReference>
<dbReference type="PANTHER" id="PTHR23403">
    <property type="entry name" value="TREHALASE"/>
    <property type="match status" value="1"/>
</dbReference>
<dbReference type="PANTHER" id="PTHR23403:SF1">
    <property type="entry name" value="TREHALASE"/>
    <property type="match status" value="1"/>
</dbReference>
<dbReference type="Pfam" id="PF01204">
    <property type="entry name" value="Trehalase"/>
    <property type="match status" value="1"/>
</dbReference>
<dbReference type="PRINTS" id="PR00744">
    <property type="entry name" value="GLHYDRLASE37"/>
</dbReference>
<dbReference type="SUPFAM" id="SSF48208">
    <property type="entry name" value="Six-hairpin glycosidases"/>
    <property type="match status" value="1"/>
</dbReference>
<dbReference type="PROSITE" id="PS00927">
    <property type="entry name" value="TREHALASE_1"/>
    <property type="match status" value="1"/>
</dbReference>
<dbReference type="PROSITE" id="PS00928">
    <property type="entry name" value="TREHALASE_2"/>
    <property type="match status" value="1"/>
</dbReference>
<protein>
    <recommendedName>
        <fullName evidence="1">Periplasmic trehalase</fullName>
        <ecNumber evidence="1">3.2.1.28</ecNumber>
    </recommendedName>
    <alternativeName>
        <fullName evidence="1">Alpha,alpha-trehalase</fullName>
    </alternativeName>
    <alternativeName>
        <fullName evidence="1">Alpha,alpha-trehalose glucohydrolase</fullName>
    </alternativeName>
</protein>
<name>TREA_XANCP</name>
<proteinExistence type="inferred from homology"/>
<organism>
    <name type="scientific">Xanthomonas campestris pv. campestris (strain ATCC 33913 / DSM 3586 / NCPPB 528 / LMG 568 / P 25)</name>
    <dbReference type="NCBI Taxonomy" id="190485"/>
    <lineage>
        <taxon>Bacteria</taxon>
        <taxon>Pseudomonadati</taxon>
        <taxon>Pseudomonadota</taxon>
        <taxon>Gammaproteobacteria</taxon>
        <taxon>Lysobacterales</taxon>
        <taxon>Lysobacteraceae</taxon>
        <taxon>Xanthomonas</taxon>
    </lineage>
</organism>
<sequence length="568" mass="62692">MPHAPARSGDAMSAAAPPCCTSLLGLSLSMFVAPCALAATPLEGAVVSAPAPTPPTPDLAYPELFQAVQRGELFDDQKHFVDFLPLRDPALINADYLAQHEHAGFDLRKFVDANFEESPPVQTDAIRQDTALREHIDALWPKLVRSQTNVPAHSSLLALPHPYVVPGGRFREVYYWDSYFTMLGLVKSGETTLSRQMLDNFAYLIDTYGHIPNGNRTYYLSRSQPPLFSYMVELQAGVEGEAVYQRYLPQLQKEYAYWMQGGDDLQPGQAARHVVRLADGSVLNRYWDERDTPRPEAWLHDTRTAAEAHDRPAADVYRDLRAGAESGWDYTSRWLADGKTLSTIRTTAIVPIDLNSLLYHLERTLAQACAHTGTACSQDYAALAQQRKQAIDAHLWNAAGYYADYDWQTRTLSNQVTAAALYPLFAGLASDDHAKRTATSVRARLLRPGGLATTALKTGQQWDEPNGWAPLQWVAVDGLRRYGEDGLARTIGERFLTQVQALFAREHKLVEKYGLDADAAGGGGGEYALQDGFGWTNGVTLMLLNLYPSQGATQAPAKTKRKPEPAAP</sequence>
<feature type="signal peptide" evidence="1">
    <location>
        <begin position="1"/>
        <end position="38"/>
    </location>
</feature>
<feature type="chain" id="PRO_0000012050" description="Periplasmic trehalase">
    <location>
        <begin position="39"/>
        <end position="568"/>
    </location>
</feature>
<feature type="active site" description="Proton donor/acceptor" evidence="1">
    <location>
        <position position="329"/>
    </location>
</feature>
<feature type="active site" description="Proton donor/acceptor" evidence="1">
    <location>
        <position position="511"/>
    </location>
</feature>
<feature type="binding site" evidence="1">
    <location>
        <position position="169"/>
    </location>
    <ligand>
        <name>substrate</name>
    </ligand>
</feature>
<feature type="binding site" evidence="1">
    <location>
        <begin position="176"/>
        <end position="177"/>
    </location>
    <ligand>
        <name>substrate</name>
    </ligand>
</feature>
<feature type="binding site" evidence="1">
    <location>
        <position position="213"/>
    </location>
    <ligand>
        <name>substrate</name>
    </ligand>
</feature>
<feature type="binding site" evidence="1">
    <location>
        <begin position="222"/>
        <end position="224"/>
    </location>
    <ligand>
        <name>substrate</name>
    </ligand>
</feature>
<feature type="binding site" evidence="1">
    <location>
        <begin position="294"/>
        <end position="296"/>
    </location>
    <ligand>
        <name>substrate</name>
    </ligand>
</feature>
<feature type="binding site" evidence="1">
    <location>
        <position position="327"/>
    </location>
    <ligand>
        <name>substrate</name>
    </ligand>
</feature>
<feature type="binding site" evidence="1">
    <location>
        <position position="526"/>
    </location>
    <ligand>
        <name>substrate</name>
    </ligand>
</feature>
<gene>
    <name evidence="1" type="primary">treA</name>
    <name type="ordered locus">XCC3529</name>
</gene>
<comment type="function">
    <text evidence="1">Provides the cells with the ability to utilize trehalose at high osmolarity by splitting it into glucose molecules that can subsequently be taken up by the phosphotransferase-mediated uptake system.</text>
</comment>
<comment type="catalytic activity">
    <reaction evidence="1">
        <text>alpha,alpha-trehalose + H2O = alpha-D-glucose + beta-D-glucose</text>
        <dbReference type="Rhea" id="RHEA:32675"/>
        <dbReference type="ChEBI" id="CHEBI:15377"/>
        <dbReference type="ChEBI" id="CHEBI:15903"/>
        <dbReference type="ChEBI" id="CHEBI:16551"/>
        <dbReference type="ChEBI" id="CHEBI:17925"/>
        <dbReference type="EC" id="3.2.1.28"/>
    </reaction>
</comment>
<comment type="subcellular location">
    <subcellularLocation>
        <location evidence="1">Periplasm</location>
    </subcellularLocation>
</comment>
<comment type="similarity">
    <text evidence="1">Belongs to the glycosyl hydrolase 37 family.</text>
</comment>
<keyword id="KW-0326">Glycosidase</keyword>
<keyword id="KW-0378">Hydrolase</keyword>
<keyword id="KW-0574">Periplasm</keyword>
<keyword id="KW-1185">Reference proteome</keyword>
<keyword id="KW-0732">Signal</keyword>